<keyword id="KW-0002">3D-structure</keyword>
<keyword id="KW-0903">Direct protein sequencing</keyword>
<keyword id="KW-0259">Enterobactin biosynthesis</keyword>
<keyword id="KW-0520">NAD</keyword>
<keyword id="KW-0560">Oxidoreductase</keyword>
<keyword id="KW-1185">Reference proteome</keyword>
<comment type="function">
    <text evidence="4 5 7">Involved in the biosynthesis of the siderophore enterobactin (enterochelin), which is a macrocyclic trimeric lactone of N-(2,3-dihydroxybenzoyl)-serine. Catalyzes the reversible NAD-dependent oxidation of the C3-hydroxyl group of 2,3-dihydro-2,3-dihydroxybenzoate (2,3-diDHB), producing the transient intermediate 2-hydroxy-3-oxo-4,6-cyclohexadiene-1-carboxylate, which undergoes rapid aromatization to the final product, 2,3-dihydroxybenzoate (2,3-DHB). Only the compounds with a C3-hydroxyl group such as methyl 2,3-dihydro-2,3-dihydroxybenzoate, methyl-3-hydroxy-1,4-cyclohexadiene-1-carboxylate, trans-3-hydroxy-2-cyclohexene-1-carboxylate, cis-3-hydroxy-4-cyclohexene-1-carboxylate, cis-3-hydroxycyclohexane-1-carboxylic acid are oxidized to the corresponding ketone products. The stereospecificity of the C3 allylic alcohol group oxidation is 3R in a 1R,3R dihydro substrate. It can also increase the DHB-AMP ligase activity of EntE by interaction EntE.</text>
</comment>
<comment type="catalytic activity">
    <reaction evidence="5">
        <text>(2S,3S)-2,3-dihydroxy-2,3-dihydrobenzoate + NAD(+) = 2,3-dihydroxybenzoate + NADH + H(+)</text>
        <dbReference type="Rhea" id="RHEA:23824"/>
        <dbReference type="ChEBI" id="CHEBI:15378"/>
        <dbReference type="ChEBI" id="CHEBI:36654"/>
        <dbReference type="ChEBI" id="CHEBI:57540"/>
        <dbReference type="ChEBI" id="CHEBI:57945"/>
        <dbReference type="ChEBI" id="CHEBI:58764"/>
        <dbReference type="EC" id="1.3.1.28"/>
    </reaction>
</comment>
<comment type="activity regulation">
    <text evidence="5">Inhibited by cis-2-hydroxy-3-cyclohexen-1-carboxylate, cis-2-hydroxycyclohexane-1-carboxylate and trans-2-hydroxycyclohexane-1-carboxylate.</text>
</comment>
<comment type="biophysicochemical properties">
    <kinetics>
        <KM evidence="5">0.26 mM for methyl 2,3-dihydro-2,3-dihydroxybenzoate (at pH 7.4 and 37 degrees Celsius)</KM>
        <KM evidence="5">0.3 mM for 2,3-dihydro-2,3-dihydroxybenzoate (at pH 7.4 and 37 degrees Celsius)</KM>
        <KM evidence="5">1.7 mM for methyl-3-hydroxy-1,4-cyclohexadiene-1-carboxylate (at pH 7.4 and 37 degrees Celsius)</KM>
        <KM evidence="5">1.9 mM for trans-3-hydroxy-2-cyclohexene-1-carboxylate (at pH 7.4 and 37 degrees Celsius)</KM>
        <KM evidence="5">2.8 mM for cis-3-hydroxy-4-cyclohexene-1-carboxylate (at pH 7.4 and 37 degrees Celsius)</KM>
        <KM evidence="5">4.1 mM for cis-3-hydroxycyclohexane-1-carboxylic acid (at pH 7.4 and 37 degrees Celsius)</KM>
        <KM evidence="5">16.5 mM for trans-3,5-cyclohexadiene-1,2-diol (at pH 7.4 and 37 degrees Celsius)</KM>
        <KM evidence="5">25.2 mM for trans-3-hydroxycyclohexane-1-carboxylic acid (at pH 7.4 and 37 degrees Celsius)</KM>
        <KM evidence="5">83.3 mM for 2-cyclohexen-1-ol (at pH 7.4 and 37 degrees Celsius)</KM>
        <KM evidence="5">168 mM for cis-3,5-cyclohexadiene-1,2-diol (at pH 7.4 and 37 degrees Celsius)</KM>
        <text evidence="5">kcat is 5550 min(-1) for dehydrogenase activity with 2,3-dihydro-2,3-dihydroxybenzoate as substrate (at pH 7.4 and 37 degrees Celsius). kcat is 1380 min(-1) for dehydrogenase activity with cis-3-hydroxy-4-cyclohexene-1-carboxylate as substrate (at pH 7.4 and 37 degrees Celsius). kcat is 1050 min(-1) for dehydrogenase activity with 2,3-dihydro-2,3-dihydroxybenzoate as substrate (at pH 7.4 and 37 degrees Celsius). kcat is 1000 min(-1) for dehydrogenase activity with cis-3,5-cyclohexadiene-1,2-diol as substrate (at pH 7.4 and 37 degrees Celsius). kcat is 300 min(-1) for dehydrogenase activity with trans-3-hydroxy-2-cyclohexene-1-carboxylate and cis-3-hydroxycyclohexane-1-carboxylic acid as substrates (at pH 7.4 and 37 degrees Celsius). kcat is 180 min(-1) for dehydrogenase activity with methyl-3-hydroxy-1,4-cyclohexadiene-1-carboxylate as substrate (at pH 7.4 and 37 degrees Celsius). kcat is 60 min(-1) for dehydrogenase activity with trans-3,5-cyclohexadiene-1,2-diol and 2-cyclohexen-1-ol as substrates (at pH 7.4 and 37 degrees Celsius). kcat is 44 min(-1) for dehydrogenase activity with trans-3-hydroxycyclohexane-1-carboxylic acid as substrate (at pH 7.4 and 37 degrees Celsius).</text>
    </kinetics>
</comment>
<comment type="pathway">
    <text evidence="10">Siderophore biosynthesis; enterobactin biosynthesis.</text>
</comment>
<comment type="subunit">
    <text evidence="3 4 7">Homotetramer; dimer of dimers. EntA and EntE interact together.</text>
</comment>
<comment type="interaction">
    <interactant intactId="EBI-1118936">
        <id>P15047</id>
    </interactant>
    <interactant intactId="EBI-1118936">
        <id>P15047</id>
        <label>entA</label>
    </interactant>
    <organismsDiffer>false</organismsDiffer>
    <experiments>4</experiments>
</comment>
<comment type="interaction">
    <interactant intactId="EBI-1118936">
        <id>P15047</id>
    </interactant>
    <interactant intactId="EBI-550322">
        <id>P10378</id>
        <label>entE</label>
    </interactant>
    <organismsDiffer>false</organismsDiffer>
    <experiments>5</experiments>
</comment>
<comment type="induction">
    <text evidence="6">Under conditions of iron deficiency and by the fur protein.</text>
</comment>
<comment type="similarity">
    <text evidence="10">Belongs to the short-chain dehydrogenases/reductases (SDR) family.</text>
</comment>
<comment type="sequence caution" evidence="10">
    <conflict type="erroneous initiation">
        <sequence resource="EMBL-CDS" id="AAB40796"/>
    </conflict>
    <text>Extended N-terminus.</text>
</comment>
<dbReference type="EC" id="1.3.1.28" evidence="5"/>
<dbReference type="EMBL" id="M24148">
    <property type="protein sequence ID" value="AAA16103.1"/>
    <property type="molecule type" value="Unassigned_DNA"/>
</dbReference>
<dbReference type="EMBL" id="M24143">
    <property type="protein sequence ID" value="AAA76836.1"/>
    <property type="molecule type" value="Genomic_DNA"/>
</dbReference>
<dbReference type="EMBL" id="U82598">
    <property type="protein sequence ID" value="AAB40796.1"/>
    <property type="status" value="ALT_INIT"/>
    <property type="molecule type" value="Genomic_DNA"/>
</dbReference>
<dbReference type="EMBL" id="U00096">
    <property type="protein sequence ID" value="AAC73697.1"/>
    <property type="molecule type" value="Genomic_DNA"/>
</dbReference>
<dbReference type="EMBL" id="AP009048">
    <property type="protein sequence ID" value="BAE76351.1"/>
    <property type="molecule type" value="Genomic_DNA"/>
</dbReference>
<dbReference type="PIR" id="A91904">
    <property type="entry name" value="DEECDB"/>
</dbReference>
<dbReference type="RefSeq" id="NP_415128.1">
    <property type="nucleotide sequence ID" value="NC_000913.3"/>
</dbReference>
<dbReference type="RefSeq" id="WP_000347651.1">
    <property type="nucleotide sequence ID" value="NZ_SSZK01000032.1"/>
</dbReference>
<dbReference type="PDB" id="2FWM">
    <property type="method" value="X-ray"/>
    <property type="resolution" value="2.00 A"/>
    <property type="chains" value="X=1-248"/>
</dbReference>
<dbReference type="PDBsum" id="2FWM"/>
<dbReference type="SMR" id="P15047"/>
<dbReference type="BioGRID" id="4260984">
    <property type="interactions" value="143"/>
</dbReference>
<dbReference type="BioGRID" id="849662">
    <property type="interactions" value="3"/>
</dbReference>
<dbReference type="ComplexPortal" id="CPX-5747">
    <property type="entry name" value="entAE 2,3-dihydroxybenzoate-AMP ligase complex"/>
</dbReference>
<dbReference type="DIP" id="DIP-9511N"/>
<dbReference type="FunCoup" id="P15047">
    <property type="interactions" value="28"/>
</dbReference>
<dbReference type="IntAct" id="P15047">
    <property type="interactions" value="10"/>
</dbReference>
<dbReference type="STRING" id="511145.b0596"/>
<dbReference type="jPOST" id="P15047"/>
<dbReference type="PaxDb" id="511145-b0596"/>
<dbReference type="EnsemblBacteria" id="AAC73697">
    <property type="protein sequence ID" value="AAC73697"/>
    <property type="gene ID" value="b0596"/>
</dbReference>
<dbReference type="GeneID" id="945284"/>
<dbReference type="KEGG" id="ecj:JW0588"/>
<dbReference type="KEGG" id="eco:b0596"/>
<dbReference type="KEGG" id="ecoc:C3026_02975"/>
<dbReference type="PATRIC" id="fig|1411691.4.peg.1673"/>
<dbReference type="EchoBASE" id="EB0255"/>
<dbReference type="eggNOG" id="COG1028">
    <property type="taxonomic scope" value="Bacteria"/>
</dbReference>
<dbReference type="HOGENOM" id="CLU_010194_1_0_6"/>
<dbReference type="InParanoid" id="P15047"/>
<dbReference type="OMA" id="SIAQTCA"/>
<dbReference type="OrthoDB" id="9803333at2"/>
<dbReference type="PhylomeDB" id="P15047"/>
<dbReference type="BioCyc" id="EcoCyc:ENTA-MONOMER"/>
<dbReference type="BioCyc" id="MetaCyc:ENTA-MONOMER"/>
<dbReference type="UniPathway" id="UPA00017"/>
<dbReference type="EvolutionaryTrace" id="P15047"/>
<dbReference type="PRO" id="PR:P15047"/>
<dbReference type="Proteomes" id="UP000000625">
    <property type="component" value="Chromosome"/>
</dbReference>
<dbReference type="GO" id="GO:0005829">
    <property type="term" value="C:cytosol"/>
    <property type="evidence" value="ECO:0000314"/>
    <property type="project" value="EcoCyc"/>
</dbReference>
<dbReference type="GO" id="GO:0032991">
    <property type="term" value="C:protein-containing complex"/>
    <property type="evidence" value="ECO:0000314"/>
    <property type="project" value="EcoCyc"/>
</dbReference>
<dbReference type="GO" id="GO:0008667">
    <property type="term" value="F:2,3-dihydro-2,3-dihydroxybenzoate dehydrogenase activity"/>
    <property type="evidence" value="ECO:0000314"/>
    <property type="project" value="EcoCyc"/>
</dbReference>
<dbReference type="GO" id="GO:0042802">
    <property type="term" value="F:identical protein binding"/>
    <property type="evidence" value="ECO:0000314"/>
    <property type="project" value="EcoCyc"/>
</dbReference>
<dbReference type="GO" id="GO:0009239">
    <property type="term" value="P:enterobactin biosynthetic process"/>
    <property type="evidence" value="ECO:0000314"/>
    <property type="project" value="ComplexPortal"/>
</dbReference>
<dbReference type="CDD" id="cd05331">
    <property type="entry name" value="DH-DHB-DH_SDR_c"/>
    <property type="match status" value="1"/>
</dbReference>
<dbReference type="FunFam" id="3.40.50.720:FF:000160">
    <property type="entry name" value="2,3-dihydro-2,3-dihydroxybenzoate dehydrogenase"/>
    <property type="match status" value="1"/>
</dbReference>
<dbReference type="Gene3D" id="3.40.50.720">
    <property type="entry name" value="NAD(P)-binding Rossmann-like Domain"/>
    <property type="match status" value="1"/>
</dbReference>
<dbReference type="InterPro" id="IPR003560">
    <property type="entry name" value="DHB_DH"/>
</dbReference>
<dbReference type="InterPro" id="IPR036291">
    <property type="entry name" value="NAD(P)-bd_dom_sf"/>
</dbReference>
<dbReference type="InterPro" id="IPR020904">
    <property type="entry name" value="Sc_DH/Rdtase_CS"/>
</dbReference>
<dbReference type="InterPro" id="IPR002347">
    <property type="entry name" value="SDR_fam"/>
</dbReference>
<dbReference type="NCBIfam" id="TIGR04316">
    <property type="entry name" value="dhbA_paeA"/>
    <property type="match status" value="1"/>
</dbReference>
<dbReference type="NCBIfam" id="NF006074">
    <property type="entry name" value="PRK08220.1"/>
    <property type="match status" value="1"/>
</dbReference>
<dbReference type="PANTHER" id="PTHR24321:SF13">
    <property type="entry name" value="2,3-DIHYDRO-2,3-DIHYDROXYBENZOATE DEHYDROGENASE"/>
    <property type="match status" value="1"/>
</dbReference>
<dbReference type="PANTHER" id="PTHR24321">
    <property type="entry name" value="DEHYDROGENASES, SHORT CHAIN"/>
    <property type="match status" value="1"/>
</dbReference>
<dbReference type="Pfam" id="PF13561">
    <property type="entry name" value="adh_short_C2"/>
    <property type="match status" value="1"/>
</dbReference>
<dbReference type="PRINTS" id="PR01397">
    <property type="entry name" value="DHBDHDRGNASE"/>
</dbReference>
<dbReference type="PRINTS" id="PR00080">
    <property type="entry name" value="SDRFAMILY"/>
</dbReference>
<dbReference type="SMART" id="SM00822">
    <property type="entry name" value="PKS_KR"/>
    <property type="match status" value="1"/>
</dbReference>
<dbReference type="SUPFAM" id="SSF51735">
    <property type="entry name" value="NAD(P)-binding Rossmann-fold domains"/>
    <property type="match status" value="1"/>
</dbReference>
<dbReference type="PROSITE" id="PS00061">
    <property type="entry name" value="ADH_SHORT"/>
    <property type="match status" value="1"/>
</dbReference>
<evidence type="ECO:0000250" key="1"/>
<evidence type="ECO:0000255" key="2">
    <source>
        <dbReference type="PROSITE-ProRule" id="PRU10001"/>
    </source>
</evidence>
<evidence type="ECO:0000269" key="3">
    <source>
    </source>
</evidence>
<evidence type="ECO:0000269" key="4">
    <source>
    </source>
</evidence>
<evidence type="ECO:0000269" key="5">
    <source>
    </source>
</evidence>
<evidence type="ECO:0000269" key="6">
    <source>
    </source>
</evidence>
<evidence type="ECO:0000269" key="7">
    <source>
    </source>
</evidence>
<evidence type="ECO:0000303" key="8">
    <source>
    </source>
</evidence>
<evidence type="ECO:0000303" key="9">
    <source>
    </source>
</evidence>
<evidence type="ECO:0000305" key="10"/>
<evidence type="ECO:0007829" key="11">
    <source>
        <dbReference type="PDB" id="2FWM"/>
    </source>
</evidence>
<name>ENTA_ECOLI</name>
<sequence>MDFSGKNVWVTGAGKGIGYATALAFVEAGAKVTGFDQAFTQEQYPFATEVMDVADAAQVAQVCQRLLAETERLDALVNAAGILRMGATDQLSKEDWQQTFAVNVGGAFNLFQQTMNQFRRQRGGAIVTVASDAAHTPRIGMSAYGASKAALKSLALSVGLELAGSGVRCNVVSPGSTDTDMQRTLWVSDDAEEQRIRGFGEQFKLGIPLGKIARPQEIANTILFLASDLASHITLQDIVVDGGSTLGA</sequence>
<organism>
    <name type="scientific">Escherichia coli (strain K12)</name>
    <dbReference type="NCBI Taxonomy" id="83333"/>
    <lineage>
        <taxon>Bacteria</taxon>
        <taxon>Pseudomonadati</taxon>
        <taxon>Pseudomonadota</taxon>
        <taxon>Gammaproteobacteria</taxon>
        <taxon>Enterobacterales</taxon>
        <taxon>Enterobacteriaceae</taxon>
        <taxon>Escherichia</taxon>
    </lineage>
</organism>
<accession>P15047</accession>
<accession>P77100</accession>
<accession>Q2MBK5</accession>
<gene>
    <name evidence="9" type="primary">entA</name>
    <name type="ordered locus">b0596</name>
    <name type="ordered locus">JW0588</name>
</gene>
<feature type="chain" id="PRO_0000054659" description="2,3-dihydro-2,3-dihydroxybenzoate dehydrogenase">
    <location>
        <begin position="1"/>
        <end position="248"/>
    </location>
</feature>
<feature type="active site" description="Proton acceptor" evidence="2">
    <location>
        <position position="144"/>
    </location>
</feature>
<feature type="binding site" evidence="1">
    <location>
        <begin position="9"/>
        <end position="33"/>
    </location>
    <ligand>
        <name>NAD(+)</name>
        <dbReference type="ChEBI" id="CHEBI:57540"/>
    </ligand>
</feature>
<feature type="binding site" evidence="1">
    <location>
        <position position="131"/>
    </location>
    <ligand>
        <name>substrate</name>
    </ligand>
</feature>
<feature type="strand" evidence="11">
    <location>
        <begin position="7"/>
        <end position="12"/>
    </location>
</feature>
<feature type="helix" evidence="11">
    <location>
        <begin position="16"/>
        <end position="27"/>
    </location>
</feature>
<feature type="strand" evidence="11">
    <location>
        <begin position="31"/>
        <end position="37"/>
    </location>
</feature>
<feature type="strand" evidence="11">
    <location>
        <begin position="45"/>
        <end position="50"/>
    </location>
</feature>
<feature type="helix" evidence="11">
    <location>
        <begin position="56"/>
        <end position="69"/>
    </location>
</feature>
<feature type="strand" evidence="11">
    <location>
        <begin position="75"/>
        <end position="78"/>
    </location>
</feature>
<feature type="turn" evidence="11">
    <location>
        <begin position="88"/>
        <end position="90"/>
    </location>
</feature>
<feature type="helix" evidence="11">
    <location>
        <begin position="93"/>
        <end position="103"/>
    </location>
</feature>
<feature type="helix" evidence="11">
    <location>
        <begin position="105"/>
        <end position="121"/>
    </location>
</feature>
<feature type="strand" evidence="11">
    <location>
        <begin position="125"/>
        <end position="129"/>
    </location>
</feature>
<feature type="helix" evidence="11">
    <location>
        <begin position="132"/>
        <end position="134"/>
    </location>
</feature>
<feature type="helix" evidence="11">
    <location>
        <begin position="142"/>
        <end position="162"/>
    </location>
</feature>
<feature type="helix" evidence="11">
    <location>
        <begin position="163"/>
        <end position="165"/>
    </location>
</feature>
<feature type="strand" evidence="11">
    <location>
        <begin position="168"/>
        <end position="174"/>
    </location>
</feature>
<feature type="helix" evidence="11">
    <location>
        <begin position="215"/>
        <end position="226"/>
    </location>
</feature>
<feature type="helix" evidence="11">
    <location>
        <begin position="228"/>
        <end position="230"/>
    </location>
</feature>
<feature type="strand" evidence="11">
    <location>
        <begin position="237"/>
        <end position="241"/>
    </location>
</feature>
<feature type="turn" evidence="11">
    <location>
        <begin position="242"/>
        <end position="247"/>
    </location>
</feature>
<proteinExistence type="evidence at protein level"/>
<protein>
    <recommendedName>
        <fullName evidence="9">2,3-dihydro-2,3-dihydroxybenzoate dehydrogenase</fullName>
        <shortName evidence="9">DiDHB-DH</shortName>
        <ecNumber evidence="5">1.3.1.28</ecNumber>
    </recommendedName>
    <alternativeName>
        <fullName evidence="8">Trans-2,3-dihydro-2,3-dihydroxybenzoate dehydrogenase</fullName>
    </alternativeName>
</protein>
<reference key="1">
    <citation type="journal article" date="1989" name="J. Bacteriol.">
        <title>Nucleotide sequence and transcriptional organization of the Escherichia coli enterobactin biosynthesis cistrons entB and entA.</title>
        <authorList>
            <person name="Nahlik M.S."/>
            <person name="Brickman T.J."/>
            <person name="Ozenberger B.A."/>
            <person name="McIntosh M.A."/>
        </authorList>
    </citation>
    <scope>NUCLEOTIDE SEQUENCE [GENOMIC DNA]</scope>
    <scope>INDUCTION</scope>
</reference>
<reference key="2">
    <citation type="journal article" date="1989" name="J. Bacteriol.">
        <title>Nucleotide sequence of a cluster of Escherichia coli enterobactin biosynthesis genes: identification of entA and purification of its product 2,3-dihydro-2,3-dihydroxybenzoate dehydrogenase.</title>
        <authorList>
            <person name="Liu J."/>
            <person name="Duncan K."/>
            <person name="Walsh C.T."/>
        </authorList>
    </citation>
    <scope>NUCLEOTIDE SEQUENCE [GENOMIC DNA]</scope>
    <scope>PROTEIN SEQUENCE OF 1-14</scope>
    <scope>FUNCTION</scope>
    <scope>SUBUNIT</scope>
</reference>
<reference key="3">
    <citation type="submission" date="1997-01" db="EMBL/GenBank/DDBJ databases">
        <title>Sequence of minutes 4-25 of Escherichia coli.</title>
        <authorList>
            <person name="Chung E."/>
            <person name="Allen E."/>
            <person name="Araujo R."/>
            <person name="Aparicio A.M."/>
            <person name="Davis K."/>
            <person name="Duncan M."/>
            <person name="Federspiel N."/>
            <person name="Hyman R."/>
            <person name="Kalman S."/>
            <person name="Komp C."/>
            <person name="Kurdi O."/>
            <person name="Lew H."/>
            <person name="Lin D."/>
            <person name="Namath A."/>
            <person name="Oefner P."/>
            <person name="Roberts D."/>
            <person name="Schramm S."/>
            <person name="Davis R.W."/>
        </authorList>
    </citation>
    <scope>NUCLEOTIDE SEQUENCE [LARGE SCALE GENOMIC DNA]</scope>
    <source>
        <strain>K12 / MG1655 / ATCC 47076</strain>
    </source>
</reference>
<reference key="4">
    <citation type="journal article" date="1997" name="Science">
        <title>The complete genome sequence of Escherichia coli K-12.</title>
        <authorList>
            <person name="Blattner F.R."/>
            <person name="Plunkett G. III"/>
            <person name="Bloch C.A."/>
            <person name="Perna N.T."/>
            <person name="Burland V."/>
            <person name="Riley M."/>
            <person name="Collado-Vides J."/>
            <person name="Glasner J.D."/>
            <person name="Rode C.K."/>
            <person name="Mayhew G.F."/>
            <person name="Gregor J."/>
            <person name="Davis N.W."/>
            <person name="Kirkpatrick H.A."/>
            <person name="Goeden M.A."/>
            <person name="Rose D.J."/>
            <person name="Mau B."/>
            <person name="Shao Y."/>
        </authorList>
    </citation>
    <scope>NUCLEOTIDE SEQUENCE [LARGE SCALE GENOMIC DNA]</scope>
    <source>
        <strain>K12 / MG1655 / ATCC 47076</strain>
    </source>
</reference>
<reference key="5">
    <citation type="journal article" date="2006" name="Mol. Syst. Biol.">
        <title>Highly accurate genome sequences of Escherichia coli K-12 strains MG1655 and W3110.</title>
        <authorList>
            <person name="Hayashi K."/>
            <person name="Morooka N."/>
            <person name="Yamamoto Y."/>
            <person name="Fujita K."/>
            <person name="Isono K."/>
            <person name="Choi S."/>
            <person name="Ohtsubo E."/>
            <person name="Baba T."/>
            <person name="Wanner B.L."/>
            <person name="Mori H."/>
            <person name="Horiuchi T."/>
        </authorList>
    </citation>
    <scope>NUCLEOTIDE SEQUENCE [LARGE SCALE GENOMIC DNA]</scope>
    <source>
        <strain>K12 / W3110 / ATCC 27325 / DSM 5911</strain>
    </source>
</reference>
<reference key="6">
    <citation type="journal article" date="1990" name="Biochemistry">
        <title>Mechanistic studies on trans-2,3-dihydro-2,3-dihydroxybenzoate dehydrogenase (EntA) in the biosynthesis of the iron chelator enterobactin.</title>
        <authorList>
            <person name="Sakaitani M."/>
            <person name="Rusnak F."/>
            <person name="Quinn N.R."/>
            <person name="Tu C."/>
            <person name="Frigo T.B."/>
            <person name="Berchtold G.A."/>
            <person name="Walsh C.T."/>
        </authorList>
    </citation>
    <scope>FUNCTION</scope>
    <scope>CATALYTIC ACTIVITY</scope>
    <scope>BIOPHYSICOCHEMICAL PROPERTIES</scope>
    <scope>ACTIVITY REGULATION</scope>
    <scope>SUBSTRATE SPECIFICITY</scope>
</reference>
<reference key="7">
    <citation type="journal article" date="2011" name="Biochemistry">
        <title>Enzymatic adenylation of 2,3-dihydroxybenzoate is enhanced by a protein-protein interaction between Escherichia coli 2,3-dihydro-2,3-dihydroxybenzoate dehydrogenase (EntA) and 2,3-dihydroxybenzoate-AMP ligase (EntE).</title>
        <authorList>
            <person name="Khalil S."/>
            <person name="Pawelek P.D."/>
        </authorList>
    </citation>
    <scope>FUNCTION</scope>
    <scope>SUBUNIT</scope>
</reference>
<reference key="8">
    <citation type="journal article" date="2006" name="Acta Crystallogr. D">
        <title>Determination of the crystal structure of EntA, a 2,3-dihydro-2,3-dihydroxybenzoic acid dehydrogenase from Escherichia coli.</title>
        <authorList>
            <person name="Sundlov J.A."/>
            <person name="Garringer J.A."/>
            <person name="Carney J.M."/>
            <person name="Reger A.S."/>
            <person name="Drake E.J."/>
            <person name="Duax W.L."/>
            <person name="Gulick A.M."/>
        </authorList>
    </citation>
    <scope>X-RAY CRYSTALLOGRAPHY (2.00 ANGSTROMS)</scope>
    <scope>SUBUNIT</scope>
</reference>